<organism>
    <name type="scientific">Psilotum nudum</name>
    <name type="common">Whisk fern</name>
    <name type="synonym">Lycopodium nudum</name>
    <dbReference type="NCBI Taxonomy" id="3240"/>
    <lineage>
        <taxon>Eukaryota</taxon>
        <taxon>Viridiplantae</taxon>
        <taxon>Streptophyta</taxon>
        <taxon>Embryophyta</taxon>
        <taxon>Tracheophyta</taxon>
        <taxon>Polypodiopsida</taxon>
        <taxon>Ophioglossidae</taxon>
        <taxon>Psilotales</taxon>
        <taxon>Psilotaceae</taxon>
        <taxon>Psilotum</taxon>
    </lineage>
</organism>
<evidence type="ECO:0000255" key="1">
    <source>
        <dbReference type="HAMAP-Rule" id="MF_00445"/>
    </source>
</evidence>
<name>NU2C2_PSINU</name>
<dbReference type="EC" id="7.1.1.-" evidence="1"/>
<dbReference type="EMBL" id="AP004638">
    <property type="protein sequence ID" value="BAB84261.1"/>
    <property type="molecule type" value="Genomic_DNA"/>
</dbReference>
<dbReference type="SMR" id="P0CD37"/>
<dbReference type="GO" id="GO:0009535">
    <property type="term" value="C:chloroplast thylakoid membrane"/>
    <property type="evidence" value="ECO:0007669"/>
    <property type="project" value="UniProtKB-SubCell"/>
</dbReference>
<dbReference type="GO" id="GO:0008137">
    <property type="term" value="F:NADH dehydrogenase (ubiquinone) activity"/>
    <property type="evidence" value="ECO:0007669"/>
    <property type="project" value="InterPro"/>
</dbReference>
<dbReference type="GO" id="GO:0048038">
    <property type="term" value="F:quinone binding"/>
    <property type="evidence" value="ECO:0007669"/>
    <property type="project" value="UniProtKB-KW"/>
</dbReference>
<dbReference type="GO" id="GO:0042773">
    <property type="term" value="P:ATP synthesis coupled electron transport"/>
    <property type="evidence" value="ECO:0007669"/>
    <property type="project" value="InterPro"/>
</dbReference>
<dbReference type="GO" id="GO:0019684">
    <property type="term" value="P:photosynthesis, light reaction"/>
    <property type="evidence" value="ECO:0007669"/>
    <property type="project" value="UniProtKB-UniRule"/>
</dbReference>
<dbReference type="HAMAP" id="MF_00445">
    <property type="entry name" value="NDH1_NuoN_1"/>
    <property type="match status" value="1"/>
</dbReference>
<dbReference type="InterPro" id="IPR010096">
    <property type="entry name" value="NADH-Q_OxRdtase_suN/2"/>
</dbReference>
<dbReference type="InterPro" id="IPR001750">
    <property type="entry name" value="ND/Mrp_TM"/>
</dbReference>
<dbReference type="InterPro" id="IPR045693">
    <property type="entry name" value="Ndh2_N"/>
</dbReference>
<dbReference type="NCBIfam" id="TIGR01770">
    <property type="entry name" value="NDH_I_N"/>
    <property type="match status" value="1"/>
</dbReference>
<dbReference type="NCBIfam" id="NF002701">
    <property type="entry name" value="PRK02504.1"/>
    <property type="match status" value="1"/>
</dbReference>
<dbReference type="PANTHER" id="PTHR22773">
    <property type="entry name" value="NADH DEHYDROGENASE"/>
    <property type="match status" value="1"/>
</dbReference>
<dbReference type="Pfam" id="PF19530">
    <property type="entry name" value="Ndh2_N"/>
    <property type="match status" value="1"/>
</dbReference>
<dbReference type="Pfam" id="PF00361">
    <property type="entry name" value="Proton_antipo_M"/>
    <property type="match status" value="1"/>
</dbReference>
<dbReference type="PRINTS" id="PR01434">
    <property type="entry name" value="NADHDHGNASE5"/>
</dbReference>
<protein>
    <recommendedName>
        <fullName evidence="1">NAD(P)H-quinone oxidoreductase subunit 2 B, chloroplastic</fullName>
        <ecNumber evidence="1">7.1.1.-</ecNumber>
    </recommendedName>
    <alternativeName>
        <fullName evidence="1">NAD(P)H dehydrogenase, subunit 2 B</fullName>
    </alternativeName>
    <alternativeName>
        <fullName evidence="1">NADH-plastoquinone oxidoreductase subunit 2 B</fullName>
    </alternativeName>
</protein>
<comment type="function">
    <text evidence="1">NDH shuttles electrons from NAD(P)H:plastoquinone, via FMN and iron-sulfur (Fe-S) centers, to quinones in the photosynthetic chain and possibly in a chloroplast respiratory chain. The immediate electron acceptor for the enzyme in this species is believed to be plastoquinone. Couples the redox reaction to proton translocation, and thus conserves the redox energy in a proton gradient.</text>
</comment>
<comment type="catalytic activity">
    <reaction evidence="1">
        <text>a plastoquinone + NADH + (n+1) H(+)(in) = a plastoquinol + NAD(+) + n H(+)(out)</text>
        <dbReference type="Rhea" id="RHEA:42608"/>
        <dbReference type="Rhea" id="RHEA-COMP:9561"/>
        <dbReference type="Rhea" id="RHEA-COMP:9562"/>
        <dbReference type="ChEBI" id="CHEBI:15378"/>
        <dbReference type="ChEBI" id="CHEBI:17757"/>
        <dbReference type="ChEBI" id="CHEBI:57540"/>
        <dbReference type="ChEBI" id="CHEBI:57945"/>
        <dbReference type="ChEBI" id="CHEBI:62192"/>
    </reaction>
</comment>
<comment type="catalytic activity">
    <reaction evidence="1">
        <text>a plastoquinone + NADPH + (n+1) H(+)(in) = a plastoquinol + NADP(+) + n H(+)(out)</text>
        <dbReference type="Rhea" id="RHEA:42612"/>
        <dbReference type="Rhea" id="RHEA-COMP:9561"/>
        <dbReference type="Rhea" id="RHEA-COMP:9562"/>
        <dbReference type="ChEBI" id="CHEBI:15378"/>
        <dbReference type="ChEBI" id="CHEBI:17757"/>
        <dbReference type="ChEBI" id="CHEBI:57783"/>
        <dbReference type="ChEBI" id="CHEBI:58349"/>
        <dbReference type="ChEBI" id="CHEBI:62192"/>
    </reaction>
</comment>
<comment type="subunit">
    <text evidence="1">NDH is composed of at least 16 different subunits, 5 of which are encoded in the nucleus.</text>
</comment>
<comment type="subcellular location">
    <subcellularLocation>
        <location evidence="1">Plastid</location>
        <location evidence="1">Chloroplast thylakoid membrane</location>
        <topology evidence="1">Multi-pass membrane protein</topology>
    </subcellularLocation>
</comment>
<comment type="similarity">
    <text evidence="1">Belongs to the complex I subunit 2 family.</text>
</comment>
<feature type="chain" id="PRO_0000391306" description="NAD(P)H-quinone oxidoreductase subunit 2 B, chloroplastic">
    <location>
        <begin position="1"/>
        <end position="496"/>
    </location>
</feature>
<feature type="transmembrane region" description="Helical" evidence="1">
    <location>
        <begin position="13"/>
        <end position="33"/>
    </location>
</feature>
<feature type="transmembrane region" description="Helical" evidence="1">
    <location>
        <begin position="41"/>
        <end position="61"/>
    </location>
</feature>
<feature type="transmembrane region" description="Helical" evidence="1">
    <location>
        <begin position="83"/>
        <end position="103"/>
    </location>
</feature>
<feature type="transmembrane region" description="Helical" evidence="1">
    <location>
        <begin position="110"/>
        <end position="130"/>
    </location>
</feature>
<feature type="transmembrane region" description="Helical" evidence="1">
    <location>
        <begin position="133"/>
        <end position="153"/>
    </location>
</feature>
<feature type="transmembrane region" description="Helical" evidence="1">
    <location>
        <begin position="168"/>
        <end position="188"/>
    </location>
</feature>
<feature type="transmembrane region" description="Helical" evidence="1">
    <location>
        <begin position="213"/>
        <end position="233"/>
    </location>
</feature>
<feature type="transmembrane region" description="Helical" evidence="1">
    <location>
        <begin position="245"/>
        <end position="265"/>
    </location>
</feature>
<feature type="transmembrane region" description="Helical" evidence="1">
    <location>
        <begin position="279"/>
        <end position="299"/>
    </location>
</feature>
<feature type="transmembrane region" description="Helical" evidence="1">
    <location>
        <begin position="307"/>
        <end position="327"/>
    </location>
</feature>
<feature type="transmembrane region" description="Helical" evidence="1">
    <location>
        <begin position="338"/>
        <end position="358"/>
    </location>
</feature>
<feature type="transmembrane region" description="Helical" evidence="1">
    <location>
        <begin position="380"/>
        <end position="400"/>
    </location>
</feature>
<feature type="transmembrane region" description="Helical" evidence="1">
    <location>
        <begin position="413"/>
        <end position="435"/>
    </location>
</feature>
<feature type="transmembrane region" description="Helical" evidence="1">
    <location>
        <begin position="470"/>
        <end position="490"/>
    </location>
</feature>
<reference key="1">
    <citation type="journal article" date="2004" name="Mol. Biol. Evol.">
        <title>Chloroplast phylogeny indicates that bryophytes are monophyletic.</title>
        <authorList>
            <person name="Nishiyama T."/>
            <person name="Wolf P.G."/>
            <person name="Kugita M."/>
            <person name="Sinclair R.B."/>
            <person name="Sugita M."/>
            <person name="Sugiura C."/>
            <person name="Wakasugi T."/>
            <person name="Yamada K."/>
            <person name="Yoshinaga K."/>
            <person name="Yamaguchi K."/>
            <person name="Ueda K."/>
            <person name="Hasebe M."/>
        </authorList>
    </citation>
    <scope>NUCLEOTIDE SEQUENCE [LARGE SCALE GENOMIC DNA]</scope>
    <source>
        <strain>Kingyoku</strain>
    </source>
</reference>
<sequence length="496" mass="54920">MKEIESFLVYSSSILPECILIFSSIGILSIDLLSLPNEGDTFWSYSISLAALAISIIILLLQWNKEPVLTFSETFQISRFNDIFRFFLLICSFLCIPLSVDYIRCTKMPVTEFLLFVLTATLGGMFLCGANDLISIFVASECLALSSYLLSGYTKRDVRSNEAMMKYLLMGGASSSILVYGFSLPYGLSGGEIQLRGMVNGLINMQMYNSAGVSIAMIFILVGIGFKLSLVPFHQWTPDVYEGSPTPVVAFFSVTSKVAALALATRLFHILFSSLSNEWHLPLEILAILSMILGNLIAVTQTSMKRMLAYSSISQIGYILIGIIAGDSDNGYASMITYMLIYIFMNLGTFACITSFGLRTGTDNIRDYAGLYRKDPILTLSLVLCLLSLGGIPPLAGFFGKLYLFWCGWKAGLYFLVSIALFTSVISIYYYSRIIKLLFTERNKRITIYMQDYKGSPYFLIPNNSIGITMILCTIASTVPGILINPIIAIAQNTLF</sequence>
<geneLocation type="chloroplast"/>
<proteinExistence type="inferred from homology"/>
<accession>P0CD37</accession>
<accession>Q8W848</accession>
<gene>
    <name evidence="1" type="primary">ndhB2</name>
</gene>
<keyword id="KW-0150">Chloroplast</keyword>
<keyword id="KW-0472">Membrane</keyword>
<keyword id="KW-0520">NAD</keyword>
<keyword id="KW-0521">NADP</keyword>
<keyword id="KW-0934">Plastid</keyword>
<keyword id="KW-0618">Plastoquinone</keyword>
<keyword id="KW-0874">Quinone</keyword>
<keyword id="KW-0793">Thylakoid</keyword>
<keyword id="KW-1278">Translocase</keyword>
<keyword id="KW-0812">Transmembrane</keyword>
<keyword id="KW-1133">Transmembrane helix</keyword>
<keyword id="KW-0813">Transport</keyword>